<name>MED6_MOUSE</name>
<reference key="1">
    <citation type="journal article" date="2005" name="Science">
        <title>The transcriptional landscape of the mammalian genome.</title>
        <authorList>
            <person name="Carninci P."/>
            <person name="Kasukawa T."/>
            <person name="Katayama S."/>
            <person name="Gough J."/>
            <person name="Frith M.C."/>
            <person name="Maeda N."/>
            <person name="Oyama R."/>
            <person name="Ravasi T."/>
            <person name="Lenhard B."/>
            <person name="Wells C."/>
            <person name="Kodzius R."/>
            <person name="Shimokawa K."/>
            <person name="Bajic V.B."/>
            <person name="Brenner S.E."/>
            <person name="Batalov S."/>
            <person name="Forrest A.R."/>
            <person name="Zavolan M."/>
            <person name="Davis M.J."/>
            <person name="Wilming L.G."/>
            <person name="Aidinis V."/>
            <person name="Allen J.E."/>
            <person name="Ambesi-Impiombato A."/>
            <person name="Apweiler R."/>
            <person name="Aturaliya R.N."/>
            <person name="Bailey T.L."/>
            <person name="Bansal M."/>
            <person name="Baxter L."/>
            <person name="Beisel K.W."/>
            <person name="Bersano T."/>
            <person name="Bono H."/>
            <person name="Chalk A.M."/>
            <person name="Chiu K.P."/>
            <person name="Choudhary V."/>
            <person name="Christoffels A."/>
            <person name="Clutterbuck D.R."/>
            <person name="Crowe M.L."/>
            <person name="Dalla E."/>
            <person name="Dalrymple B.P."/>
            <person name="de Bono B."/>
            <person name="Della Gatta G."/>
            <person name="di Bernardo D."/>
            <person name="Down T."/>
            <person name="Engstrom P."/>
            <person name="Fagiolini M."/>
            <person name="Faulkner G."/>
            <person name="Fletcher C.F."/>
            <person name="Fukushima T."/>
            <person name="Furuno M."/>
            <person name="Futaki S."/>
            <person name="Gariboldi M."/>
            <person name="Georgii-Hemming P."/>
            <person name="Gingeras T.R."/>
            <person name="Gojobori T."/>
            <person name="Green R.E."/>
            <person name="Gustincich S."/>
            <person name="Harbers M."/>
            <person name="Hayashi Y."/>
            <person name="Hensch T.K."/>
            <person name="Hirokawa N."/>
            <person name="Hill D."/>
            <person name="Huminiecki L."/>
            <person name="Iacono M."/>
            <person name="Ikeo K."/>
            <person name="Iwama A."/>
            <person name="Ishikawa T."/>
            <person name="Jakt M."/>
            <person name="Kanapin A."/>
            <person name="Katoh M."/>
            <person name="Kawasawa Y."/>
            <person name="Kelso J."/>
            <person name="Kitamura H."/>
            <person name="Kitano H."/>
            <person name="Kollias G."/>
            <person name="Krishnan S.P."/>
            <person name="Kruger A."/>
            <person name="Kummerfeld S.K."/>
            <person name="Kurochkin I.V."/>
            <person name="Lareau L.F."/>
            <person name="Lazarevic D."/>
            <person name="Lipovich L."/>
            <person name="Liu J."/>
            <person name="Liuni S."/>
            <person name="McWilliam S."/>
            <person name="Madan Babu M."/>
            <person name="Madera M."/>
            <person name="Marchionni L."/>
            <person name="Matsuda H."/>
            <person name="Matsuzawa S."/>
            <person name="Miki H."/>
            <person name="Mignone F."/>
            <person name="Miyake S."/>
            <person name="Morris K."/>
            <person name="Mottagui-Tabar S."/>
            <person name="Mulder N."/>
            <person name="Nakano N."/>
            <person name="Nakauchi H."/>
            <person name="Ng P."/>
            <person name="Nilsson R."/>
            <person name="Nishiguchi S."/>
            <person name="Nishikawa S."/>
            <person name="Nori F."/>
            <person name="Ohara O."/>
            <person name="Okazaki Y."/>
            <person name="Orlando V."/>
            <person name="Pang K.C."/>
            <person name="Pavan W.J."/>
            <person name="Pavesi G."/>
            <person name="Pesole G."/>
            <person name="Petrovsky N."/>
            <person name="Piazza S."/>
            <person name="Reed J."/>
            <person name="Reid J.F."/>
            <person name="Ring B.Z."/>
            <person name="Ringwald M."/>
            <person name="Rost B."/>
            <person name="Ruan Y."/>
            <person name="Salzberg S.L."/>
            <person name="Sandelin A."/>
            <person name="Schneider C."/>
            <person name="Schoenbach C."/>
            <person name="Sekiguchi K."/>
            <person name="Semple C.A."/>
            <person name="Seno S."/>
            <person name="Sessa L."/>
            <person name="Sheng Y."/>
            <person name="Shibata Y."/>
            <person name="Shimada H."/>
            <person name="Shimada K."/>
            <person name="Silva D."/>
            <person name="Sinclair B."/>
            <person name="Sperling S."/>
            <person name="Stupka E."/>
            <person name="Sugiura K."/>
            <person name="Sultana R."/>
            <person name="Takenaka Y."/>
            <person name="Taki K."/>
            <person name="Tammoja K."/>
            <person name="Tan S.L."/>
            <person name="Tang S."/>
            <person name="Taylor M.S."/>
            <person name="Tegner J."/>
            <person name="Teichmann S.A."/>
            <person name="Ueda H.R."/>
            <person name="van Nimwegen E."/>
            <person name="Verardo R."/>
            <person name="Wei C.L."/>
            <person name="Yagi K."/>
            <person name="Yamanishi H."/>
            <person name="Zabarovsky E."/>
            <person name="Zhu S."/>
            <person name="Zimmer A."/>
            <person name="Hide W."/>
            <person name="Bult C."/>
            <person name="Grimmond S.M."/>
            <person name="Teasdale R.D."/>
            <person name="Liu E.T."/>
            <person name="Brusic V."/>
            <person name="Quackenbush J."/>
            <person name="Wahlestedt C."/>
            <person name="Mattick J.S."/>
            <person name="Hume D.A."/>
            <person name="Kai C."/>
            <person name="Sasaki D."/>
            <person name="Tomaru Y."/>
            <person name="Fukuda S."/>
            <person name="Kanamori-Katayama M."/>
            <person name="Suzuki M."/>
            <person name="Aoki J."/>
            <person name="Arakawa T."/>
            <person name="Iida J."/>
            <person name="Imamura K."/>
            <person name="Itoh M."/>
            <person name="Kato T."/>
            <person name="Kawaji H."/>
            <person name="Kawagashira N."/>
            <person name="Kawashima T."/>
            <person name="Kojima M."/>
            <person name="Kondo S."/>
            <person name="Konno H."/>
            <person name="Nakano K."/>
            <person name="Ninomiya N."/>
            <person name="Nishio T."/>
            <person name="Okada M."/>
            <person name="Plessy C."/>
            <person name="Shibata K."/>
            <person name="Shiraki T."/>
            <person name="Suzuki S."/>
            <person name="Tagami M."/>
            <person name="Waki K."/>
            <person name="Watahiki A."/>
            <person name="Okamura-Oho Y."/>
            <person name="Suzuki H."/>
            <person name="Kawai J."/>
            <person name="Hayashizaki Y."/>
        </authorList>
    </citation>
    <scope>NUCLEOTIDE SEQUENCE [LARGE SCALE MRNA]</scope>
    <source>
        <strain>NOD</strain>
        <tissue>Spleen</tissue>
        <tissue>Thymus</tissue>
    </source>
</reference>
<reference key="2">
    <citation type="journal article" date="2004" name="Genome Res.">
        <title>The status, quality, and expansion of the NIH full-length cDNA project: the Mammalian Gene Collection (MGC).</title>
        <authorList>
            <consortium name="The MGC Project Team"/>
        </authorList>
    </citation>
    <scope>NUCLEOTIDE SEQUENCE [LARGE SCALE MRNA] OF 2-246</scope>
    <source>
        <strain>FVB/N</strain>
        <tissue>Mammary tumor</tissue>
    </source>
</reference>
<reference key="3">
    <citation type="journal article" date="2013" name="Mol. Cell">
        <title>SIRT5-mediated lysine desuccinylation impacts diverse metabolic pathways.</title>
        <authorList>
            <person name="Park J."/>
            <person name="Chen Y."/>
            <person name="Tishkoff D.X."/>
            <person name="Peng C."/>
            <person name="Tan M."/>
            <person name="Dai L."/>
            <person name="Xie Z."/>
            <person name="Zhang Y."/>
            <person name="Zwaans B.M."/>
            <person name="Skinner M.E."/>
            <person name="Lombard D.B."/>
            <person name="Zhao Y."/>
        </authorList>
    </citation>
    <scope>ACETYLATION [LARGE SCALE ANALYSIS] AT LYS-236 AND LYS-241</scope>
    <scope>IDENTIFICATION BY MASS SPECTROMETRY [LARGE SCALE ANALYSIS]</scope>
    <source>
        <tissue>Embryonic fibroblast</tissue>
    </source>
</reference>
<organism>
    <name type="scientific">Mus musculus</name>
    <name type="common">Mouse</name>
    <dbReference type="NCBI Taxonomy" id="10090"/>
    <lineage>
        <taxon>Eukaryota</taxon>
        <taxon>Metazoa</taxon>
        <taxon>Chordata</taxon>
        <taxon>Craniata</taxon>
        <taxon>Vertebrata</taxon>
        <taxon>Euteleostomi</taxon>
        <taxon>Mammalia</taxon>
        <taxon>Eutheria</taxon>
        <taxon>Euarchontoglires</taxon>
        <taxon>Glires</taxon>
        <taxon>Rodentia</taxon>
        <taxon>Myomorpha</taxon>
        <taxon>Muroidea</taxon>
        <taxon>Muridae</taxon>
        <taxon>Murinae</taxon>
        <taxon>Mus</taxon>
        <taxon>Mus</taxon>
    </lineage>
</organism>
<proteinExistence type="evidence at protein level"/>
<dbReference type="EMBL" id="AK089101">
    <property type="protein sequence ID" value="BAC40749.1"/>
    <property type="molecule type" value="mRNA"/>
</dbReference>
<dbReference type="EMBL" id="AK171784">
    <property type="protein sequence ID" value="BAE42663.1"/>
    <property type="status" value="ALT_FRAME"/>
    <property type="molecule type" value="mRNA"/>
</dbReference>
<dbReference type="EMBL" id="BC013096">
    <property type="protein sequence ID" value="AAH13096.1"/>
    <property type="status" value="ALT_INIT"/>
    <property type="molecule type" value="mRNA"/>
</dbReference>
<dbReference type="CCDS" id="CCDS83983.1"/>
<dbReference type="RefSeq" id="NP_001334313.1">
    <property type="nucleotide sequence ID" value="NM_001347384.1"/>
</dbReference>
<dbReference type="RefSeq" id="NP_001334315.1">
    <property type="nucleotide sequence ID" value="NM_001347386.1"/>
</dbReference>
<dbReference type="RefSeq" id="NP_081489.2">
    <property type="nucleotide sequence ID" value="NM_027213.2"/>
</dbReference>
<dbReference type="PDB" id="6W1S">
    <property type="method" value="EM"/>
    <property type="resolution" value="4.02 A"/>
    <property type="chains" value="C=1-246"/>
</dbReference>
<dbReference type="PDB" id="8T1I">
    <property type="method" value="EM"/>
    <property type="resolution" value="4.68 A"/>
    <property type="chains" value="C=1-246"/>
</dbReference>
<dbReference type="PDB" id="8T1L">
    <property type="method" value="EM"/>
    <property type="resolution" value="4.83 A"/>
    <property type="chains" value="C=1-246"/>
</dbReference>
<dbReference type="PDBsum" id="6W1S"/>
<dbReference type="PDBsum" id="8T1I"/>
<dbReference type="PDBsum" id="8T1L"/>
<dbReference type="EMDB" id="EMD-21514"/>
<dbReference type="EMDB" id="EMD-40968"/>
<dbReference type="EMDB" id="EMD-40971"/>
<dbReference type="SMR" id="Q921D4"/>
<dbReference type="BioGRID" id="213683">
    <property type="interactions" value="7"/>
</dbReference>
<dbReference type="ComplexPortal" id="CPX-3264">
    <property type="entry name" value="Core mediator complex"/>
</dbReference>
<dbReference type="CORUM" id="Q921D4"/>
<dbReference type="DIP" id="DIP-60703N"/>
<dbReference type="FunCoup" id="Q921D4">
    <property type="interactions" value="3415"/>
</dbReference>
<dbReference type="IntAct" id="Q921D4">
    <property type="interactions" value="5"/>
</dbReference>
<dbReference type="MINT" id="Q921D4"/>
<dbReference type="STRING" id="10090.ENSMUSP00000125156"/>
<dbReference type="iPTMnet" id="Q921D4"/>
<dbReference type="PhosphoSitePlus" id="Q921D4"/>
<dbReference type="PaxDb" id="10090-ENSMUSP00000125156"/>
<dbReference type="PeptideAtlas" id="Q921D4"/>
<dbReference type="ProteomicsDB" id="292288"/>
<dbReference type="Pumba" id="Q921D4"/>
<dbReference type="Antibodypedia" id="25135">
    <property type="antibodies" value="297 antibodies from 28 providers"/>
</dbReference>
<dbReference type="DNASU" id="69792"/>
<dbReference type="Ensembl" id="ENSMUST00000161211.8">
    <property type="protein sequence ID" value="ENSMUSP00000125156.2"/>
    <property type="gene ID" value="ENSMUSG00000002679.15"/>
</dbReference>
<dbReference type="GeneID" id="69792"/>
<dbReference type="KEGG" id="mmu:69792"/>
<dbReference type="UCSC" id="uc007ocl.1">
    <property type="organism name" value="mouse"/>
</dbReference>
<dbReference type="AGR" id="MGI:1917042"/>
<dbReference type="CTD" id="10001"/>
<dbReference type="MGI" id="MGI:1917042">
    <property type="gene designation" value="Med6"/>
</dbReference>
<dbReference type="VEuPathDB" id="HostDB:ENSMUSG00000002679"/>
<dbReference type="eggNOG" id="KOG3169">
    <property type="taxonomic scope" value="Eukaryota"/>
</dbReference>
<dbReference type="GeneTree" id="ENSGT00390000017666"/>
<dbReference type="HOGENOM" id="CLU_077754_1_0_1"/>
<dbReference type="InParanoid" id="Q921D4"/>
<dbReference type="OMA" id="KKDMKPP"/>
<dbReference type="OrthoDB" id="344220at2759"/>
<dbReference type="PhylomeDB" id="Q921D4"/>
<dbReference type="TreeFam" id="TF313577"/>
<dbReference type="BioGRID-ORCS" id="69792">
    <property type="hits" value="21 hits in 60 CRISPR screens"/>
</dbReference>
<dbReference type="ChiTaRS" id="Med6">
    <property type="organism name" value="mouse"/>
</dbReference>
<dbReference type="PRO" id="PR:Q921D4"/>
<dbReference type="Proteomes" id="UP000000589">
    <property type="component" value="Chromosome 12"/>
</dbReference>
<dbReference type="RNAct" id="Q921D4">
    <property type="molecule type" value="protein"/>
</dbReference>
<dbReference type="Bgee" id="ENSMUSG00000002679">
    <property type="expression patterns" value="Expressed in dorsal pancreas and 259 other cell types or tissues"/>
</dbReference>
<dbReference type="ExpressionAtlas" id="Q921D4">
    <property type="expression patterns" value="baseline and differential"/>
</dbReference>
<dbReference type="GO" id="GO:0070847">
    <property type="term" value="C:core mediator complex"/>
    <property type="evidence" value="ECO:0000266"/>
    <property type="project" value="ComplexPortal"/>
</dbReference>
<dbReference type="GO" id="GO:0016592">
    <property type="term" value="C:mediator complex"/>
    <property type="evidence" value="ECO:0000314"/>
    <property type="project" value="MGI"/>
</dbReference>
<dbReference type="GO" id="GO:0005654">
    <property type="term" value="C:nucleoplasm"/>
    <property type="evidence" value="ECO:0000304"/>
    <property type="project" value="Reactome"/>
</dbReference>
<dbReference type="GO" id="GO:0005634">
    <property type="term" value="C:nucleus"/>
    <property type="evidence" value="ECO:0000314"/>
    <property type="project" value="MGI"/>
</dbReference>
<dbReference type="GO" id="GO:0000151">
    <property type="term" value="C:ubiquitin ligase complex"/>
    <property type="evidence" value="ECO:0007669"/>
    <property type="project" value="Ensembl"/>
</dbReference>
<dbReference type="GO" id="GO:0003677">
    <property type="term" value="F:DNA binding"/>
    <property type="evidence" value="ECO:0000314"/>
    <property type="project" value="MGI"/>
</dbReference>
<dbReference type="GO" id="GO:0003713">
    <property type="term" value="F:transcription coactivator activity"/>
    <property type="evidence" value="ECO:0000266"/>
    <property type="project" value="MGI"/>
</dbReference>
<dbReference type="GO" id="GO:0001223">
    <property type="term" value="F:transcription coactivator binding"/>
    <property type="evidence" value="ECO:0007669"/>
    <property type="project" value="Ensembl"/>
</dbReference>
<dbReference type="GO" id="GO:0061630">
    <property type="term" value="F:ubiquitin protein ligase activity"/>
    <property type="evidence" value="ECO:0007669"/>
    <property type="project" value="Ensembl"/>
</dbReference>
<dbReference type="GO" id="GO:0045944">
    <property type="term" value="P:positive regulation of transcription by RNA polymerase II"/>
    <property type="evidence" value="ECO:0000266"/>
    <property type="project" value="MGI"/>
</dbReference>
<dbReference type="GO" id="GO:0032968">
    <property type="term" value="P:positive regulation of transcription elongation by RNA polymerase II"/>
    <property type="evidence" value="ECO:0000303"/>
    <property type="project" value="ComplexPortal"/>
</dbReference>
<dbReference type="GO" id="GO:0060261">
    <property type="term" value="P:positive regulation of transcription initiation by RNA polymerase II"/>
    <property type="evidence" value="ECO:0000303"/>
    <property type="project" value="ComplexPortal"/>
</dbReference>
<dbReference type="GO" id="GO:0016567">
    <property type="term" value="P:protein ubiquitination"/>
    <property type="evidence" value="ECO:0007669"/>
    <property type="project" value="Ensembl"/>
</dbReference>
<dbReference type="GO" id="GO:0051123">
    <property type="term" value="P:RNA polymerase II preinitiation complex assembly"/>
    <property type="evidence" value="ECO:0000303"/>
    <property type="project" value="ComplexPortal"/>
</dbReference>
<dbReference type="GO" id="GO:0035019">
    <property type="term" value="P:somatic stem cell population maintenance"/>
    <property type="evidence" value="ECO:0000315"/>
    <property type="project" value="MGI"/>
</dbReference>
<dbReference type="FunFam" id="3.10.450.580:FF:000001">
    <property type="entry name" value="Mediator of RNA polymerase II transcription subunit 6"/>
    <property type="match status" value="1"/>
</dbReference>
<dbReference type="Gene3D" id="3.10.450.580">
    <property type="entry name" value="Mediator complex, subunit Med6"/>
    <property type="match status" value="1"/>
</dbReference>
<dbReference type="InterPro" id="IPR007018">
    <property type="entry name" value="Mediator_Med6"/>
</dbReference>
<dbReference type="InterPro" id="IPR016820">
    <property type="entry name" value="Mediator_Med6_met/pln"/>
</dbReference>
<dbReference type="InterPro" id="IPR038566">
    <property type="entry name" value="Mediator_Med6_sf"/>
</dbReference>
<dbReference type="PANTHER" id="PTHR13104">
    <property type="entry name" value="MED-6-RELATED"/>
    <property type="match status" value="1"/>
</dbReference>
<dbReference type="Pfam" id="PF04934">
    <property type="entry name" value="Med6"/>
    <property type="match status" value="1"/>
</dbReference>
<dbReference type="PIRSF" id="PIRSF023869">
    <property type="entry name" value="Mediator_MED6_meta/pln"/>
    <property type="match status" value="1"/>
</dbReference>
<gene>
    <name type="primary">Med6</name>
</gene>
<keyword id="KW-0002">3D-structure</keyword>
<keyword id="KW-0007">Acetylation</keyword>
<keyword id="KW-0010">Activator</keyword>
<keyword id="KW-1017">Isopeptide bond</keyword>
<keyword id="KW-0539">Nucleus</keyword>
<keyword id="KW-1185">Reference proteome</keyword>
<keyword id="KW-0804">Transcription</keyword>
<keyword id="KW-0805">Transcription regulation</keyword>
<keyword id="KW-0832">Ubl conjugation</keyword>
<feature type="chain" id="PRO_0000303042" description="Mediator of RNA polymerase II transcription subunit 6">
    <location>
        <begin position="1"/>
        <end position="246"/>
    </location>
</feature>
<feature type="region of interest" description="Disordered" evidence="3">
    <location>
        <begin position="191"/>
        <end position="246"/>
    </location>
</feature>
<feature type="compositionally biased region" description="Basic and acidic residues" evidence="3">
    <location>
        <begin position="206"/>
        <end position="226"/>
    </location>
</feature>
<feature type="modified residue" description="N6-acetyllysine" evidence="5">
    <location>
        <position position="236"/>
    </location>
</feature>
<feature type="modified residue" description="N6-acetyllysine" evidence="5">
    <location>
        <position position="241"/>
    </location>
</feature>
<feature type="cross-link" description="Glycyl lysine isopeptide (Lys-Gly) (interchain with G-Cter in SUMO2)" evidence="2">
    <location>
        <position position="208"/>
    </location>
</feature>
<evidence type="ECO:0000250" key="1"/>
<evidence type="ECO:0000250" key="2">
    <source>
        <dbReference type="UniProtKB" id="O75586"/>
    </source>
</evidence>
<evidence type="ECO:0000256" key="3">
    <source>
        <dbReference type="SAM" id="MobiDB-lite"/>
    </source>
</evidence>
<evidence type="ECO:0000305" key="4"/>
<evidence type="ECO:0007744" key="5">
    <source>
    </source>
</evidence>
<accession>Q921D4</accession>
<accession>Q3TAK5</accession>
<accession>Q8BTP9</accession>
<sequence>MAAVDIRDNLLGISWVDSSWIPILNSGSVLDYFSERSNPFYDRTCNNEVVKMQRLTLEHLNQMVGIEYILLHAQEPILFIIRKQQRQSPAQVIPLADYYIIAGVIYQAPDLGSVINSRVLTAVHGIQSAFDEAMSYCRYHPSKGYWWHFKDHEEQEKVKPKAKRKEEPSSIFQRQRVDALLIDLRQKFPPRFVQQKSGEKPVPVDQAKKEAEPLPETVKSEEKESTKNIQQTVSTKGPPEKRMRLQ</sequence>
<protein>
    <recommendedName>
        <fullName>Mediator of RNA polymerase II transcription subunit 6</fullName>
    </recommendedName>
    <alternativeName>
        <fullName>Mediator complex subunit 6</fullName>
    </alternativeName>
</protein>
<comment type="function">
    <text evidence="1">Component of the Mediator complex, a coactivator involved in the regulated transcription of nearly all RNA polymerase II-dependent genes. Mediator functions as a bridge to convey information from gene-specific regulatory proteins to the basal RNA polymerase II transcription machinery. Mediator is recruited to promoters by direct interactions with regulatory proteins and serves as a scaffold for the assembly of a functional preinitiation complex with RNA polymerase II and the general transcription factors (By similarity).</text>
</comment>
<comment type="subunit">
    <text evidence="1">Component of the Mediator complex, which is composed of MED1, MED4, MED6, MED7, MED8, MED9, MED10, MED11, MED12, MED13, MED13L, MED14, MED15, MED16, MED17, MED18, MED19, MED20, MED21, MED22, MED23, MED24, MED25, MED26, MED27, MED29, MED30, MED31, CCNC, CDK8 and CDC2L6/CDK11. The MED12, MED13, CCNC and CDK8 subunits form a distinct module termed the CDK8 module. Mediator containing the CDK8 module is less active than Mediator lacking this module in supporting transcriptional activation. Individual preparations of the Mediator complex lacking one or more distinct subunits have been variously termed ARC, CRSP, DRIP, PC2, SMCC and TRAP. Interacts with CTNNB1 and GLI3 (By similarity).</text>
</comment>
<comment type="subcellular location">
    <subcellularLocation>
        <location evidence="1">Nucleus</location>
    </subcellularLocation>
</comment>
<comment type="similarity">
    <text evidence="4">Belongs to the Mediator complex subunit 6 family.</text>
</comment>
<comment type="sequence caution" evidence="4">
    <conflict type="erroneous initiation">
        <sequence resource="EMBL-CDS" id="AAH13096"/>
    </conflict>
</comment>
<comment type="sequence caution" evidence="4">
    <conflict type="frameshift">
        <sequence resource="EMBL-CDS" id="BAE42663"/>
    </conflict>
</comment>